<dbReference type="EMBL" id="AP008211">
    <property type="protein sequence ID" value="BAF17646.1"/>
    <property type="molecule type" value="Genomic_DNA"/>
</dbReference>
<dbReference type="EMBL" id="AP014961">
    <property type="protein sequence ID" value="BAS94369.1"/>
    <property type="molecule type" value="Genomic_DNA"/>
</dbReference>
<dbReference type="EMBL" id="CM000142">
    <property type="protein sequence ID" value="EEE63962.1"/>
    <property type="molecule type" value="Genomic_DNA"/>
</dbReference>
<dbReference type="EMBL" id="CB679741">
    <property type="status" value="NOT_ANNOTATED_CDS"/>
    <property type="molecule type" value="mRNA"/>
</dbReference>
<dbReference type="RefSeq" id="XP_015637982.1">
    <property type="nucleotide sequence ID" value="XM_015782496.1"/>
</dbReference>
<dbReference type="FunCoup" id="Q0DHM7">
    <property type="interactions" value="23"/>
</dbReference>
<dbReference type="PaxDb" id="39947-Q0DHM7"/>
<dbReference type="EnsemblPlants" id="Os05t0456500-01">
    <property type="protein sequence ID" value="Os05t0456500-01"/>
    <property type="gene ID" value="Os05g0456500"/>
</dbReference>
<dbReference type="Gramene" id="Os05t0456500-01">
    <property type="protein sequence ID" value="Os05t0456500-01"/>
    <property type="gene ID" value="Os05g0456500"/>
</dbReference>
<dbReference type="KEGG" id="dosa:Os05g0456500"/>
<dbReference type="eggNOG" id="ENOG502RXNM">
    <property type="taxonomic scope" value="Eukaryota"/>
</dbReference>
<dbReference type="HOGENOM" id="CLU_103961_1_0_1"/>
<dbReference type="InParanoid" id="Q0DHM7"/>
<dbReference type="OMA" id="CHMFQIS"/>
<dbReference type="OrthoDB" id="754299at2759"/>
<dbReference type="Proteomes" id="UP000000763">
    <property type="component" value="Chromosome 5"/>
</dbReference>
<dbReference type="Proteomes" id="UP000007752">
    <property type="component" value="Chromosome 5"/>
</dbReference>
<dbReference type="Proteomes" id="UP000059680">
    <property type="component" value="Chromosome 5"/>
</dbReference>
<dbReference type="ExpressionAtlas" id="Q0DHM7">
    <property type="expression patterns" value="baseline and differential"/>
</dbReference>
<dbReference type="GO" id="GO:0016020">
    <property type="term" value="C:membrane"/>
    <property type="evidence" value="ECO:0000318"/>
    <property type="project" value="GO_Central"/>
</dbReference>
<dbReference type="GO" id="GO:0005886">
    <property type="term" value="C:plasma membrane"/>
    <property type="evidence" value="ECO:0007669"/>
    <property type="project" value="UniProtKB-SubCell"/>
</dbReference>
<dbReference type="InterPro" id="IPR006702">
    <property type="entry name" value="CASP_dom"/>
</dbReference>
<dbReference type="InterPro" id="IPR045009">
    <property type="entry name" value="CASPL-5"/>
</dbReference>
<dbReference type="PANTHER" id="PTHR32021:SF41">
    <property type="entry name" value="CASP-LIKE PROTEIN 5B2"/>
    <property type="match status" value="1"/>
</dbReference>
<dbReference type="PANTHER" id="PTHR32021">
    <property type="entry name" value="CASP-LIKE PROTEIN 5B3"/>
    <property type="match status" value="1"/>
</dbReference>
<dbReference type="Pfam" id="PF04535">
    <property type="entry name" value="CASP_dom"/>
    <property type="match status" value="1"/>
</dbReference>
<evidence type="ECO:0000250" key="1"/>
<evidence type="ECO:0000255" key="2"/>
<evidence type="ECO:0000305" key="3"/>
<name>CSPLS_ORYSJ</name>
<feature type="chain" id="PRO_0000418691" description="CASP-like protein 5B2">
    <location>
        <begin position="1"/>
        <end position="155"/>
    </location>
</feature>
<feature type="topological domain" description="Cytoplasmic" evidence="2">
    <location>
        <begin position="1"/>
        <end position="18"/>
    </location>
</feature>
<feature type="transmembrane region" description="Helical" evidence="2">
    <location>
        <begin position="19"/>
        <end position="39"/>
    </location>
</feature>
<feature type="topological domain" description="Extracellular" evidence="2">
    <location>
        <begin position="40"/>
        <end position="43"/>
    </location>
</feature>
<feature type="transmembrane region" description="Helical" evidence="2">
    <location>
        <begin position="44"/>
        <end position="64"/>
    </location>
</feature>
<feature type="topological domain" description="Cytoplasmic" evidence="2">
    <location>
        <begin position="65"/>
        <end position="77"/>
    </location>
</feature>
<feature type="transmembrane region" description="Helical" evidence="2">
    <location>
        <begin position="78"/>
        <end position="98"/>
    </location>
</feature>
<feature type="topological domain" description="Extracellular" evidence="2">
    <location>
        <begin position="99"/>
        <end position="128"/>
    </location>
</feature>
<feature type="transmembrane region" description="Helical" evidence="2">
    <location>
        <begin position="129"/>
        <end position="149"/>
    </location>
</feature>
<feature type="topological domain" description="Cytoplasmic" evidence="2">
    <location>
        <begin position="150"/>
        <end position="155"/>
    </location>
</feature>
<feature type="glycosylation site" description="N-linked (GlcNAc...) asparagine" evidence="2">
    <location>
        <position position="40"/>
    </location>
</feature>
<organism>
    <name type="scientific">Oryza sativa subsp. japonica</name>
    <name type="common">Rice</name>
    <dbReference type="NCBI Taxonomy" id="39947"/>
    <lineage>
        <taxon>Eukaryota</taxon>
        <taxon>Viridiplantae</taxon>
        <taxon>Streptophyta</taxon>
        <taxon>Embryophyta</taxon>
        <taxon>Tracheophyta</taxon>
        <taxon>Spermatophyta</taxon>
        <taxon>Magnoliopsida</taxon>
        <taxon>Liliopsida</taxon>
        <taxon>Poales</taxon>
        <taxon>Poaceae</taxon>
        <taxon>BOP clade</taxon>
        <taxon>Oryzoideae</taxon>
        <taxon>Oryzeae</taxon>
        <taxon>Oryzinae</taxon>
        <taxon>Oryza</taxon>
        <taxon>Oryza sativa</taxon>
    </lineage>
</organism>
<reference key="1">
    <citation type="journal article" date="2005" name="Nature">
        <title>The map-based sequence of the rice genome.</title>
        <authorList>
            <consortium name="International rice genome sequencing project (IRGSP)"/>
        </authorList>
    </citation>
    <scope>NUCLEOTIDE SEQUENCE [LARGE SCALE GENOMIC DNA]</scope>
    <source>
        <strain>cv. Nipponbare</strain>
    </source>
</reference>
<reference key="2">
    <citation type="journal article" date="2008" name="Nucleic Acids Res.">
        <title>The rice annotation project database (RAP-DB): 2008 update.</title>
        <authorList>
            <consortium name="The rice annotation project (RAP)"/>
        </authorList>
    </citation>
    <scope>GENOME REANNOTATION</scope>
    <source>
        <strain>cv. Nipponbare</strain>
    </source>
</reference>
<reference key="3">
    <citation type="journal article" date="2013" name="Rice">
        <title>Improvement of the Oryza sativa Nipponbare reference genome using next generation sequence and optical map data.</title>
        <authorList>
            <person name="Kawahara Y."/>
            <person name="de la Bastide M."/>
            <person name="Hamilton J.P."/>
            <person name="Kanamori H."/>
            <person name="McCombie W.R."/>
            <person name="Ouyang S."/>
            <person name="Schwartz D.C."/>
            <person name="Tanaka T."/>
            <person name="Wu J."/>
            <person name="Zhou S."/>
            <person name="Childs K.L."/>
            <person name="Davidson R.M."/>
            <person name="Lin H."/>
            <person name="Quesada-Ocampo L."/>
            <person name="Vaillancourt B."/>
            <person name="Sakai H."/>
            <person name="Lee S.S."/>
            <person name="Kim J."/>
            <person name="Numa H."/>
            <person name="Itoh T."/>
            <person name="Buell C.R."/>
            <person name="Matsumoto T."/>
        </authorList>
    </citation>
    <scope>GENOME REANNOTATION</scope>
    <source>
        <strain>cv. Nipponbare</strain>
    </source>
</reference>
<reference key="4">
    <citation type="journal article" date="2005" name="PLoS Biol.">
        <title>The genomes of Oryza sativa: a history of duplications.</title>
        <authorList>
            <person name="Yu J."/>
            <person name="Wang J."/>
            <person name="Lin W."/>
            <person name="Li S."/>
            <person name="Li H."/>
            <person name="Zhou J."/>
            <person name="Ni P."/>
            <person name="Dong W."/>
            <person name="Hu S."/>
            <person name="Zeng C."/>
            <person name="Zhang J."/>
            <person name="Zhang Y."/>
            <person name="Li R."/>
            <person name="Xu Z."/>
            <person name="Li S."/>
            <person name="Li X."/>
            <person name="Zheng H."/>
            <person name="Cong L."/>
            <person name="Lin L."/>
            <person name="Yin J."/>
            <person name="Geng J."/>
            <person name="Li G."/>
            <person name="Shi J."/>
            <person name="Liu J."/>
            <person name="Lv H."/>
            <person name="Li J."/>
            <person name="Wang J."/>
            <person name="Deng Y."/>
            <person name="Ran L."/>
            <person name="Shi X."/>
            <person name="Wang X."/>
            <person name="Wu Q."/>
            <person name="Li C."/>
            <person name="Ren X."/>
            <person name="Wang J."/>
            <person name="Wang X."/>
            <person name="Li D."/>
            <person name="Liu D."/>
            <person name="Zhang X."/>
            <person name="Ji Z."/>
            <person name="Zhao W."/>
            <person name="Sun Y."/>
            <person name="Zhang Z."/>
            <person name="Bao J."/>
            <person name="Han Y."/>
            <person name="Dong L."/>
            <person name="Ji J."/>
            <person name="Chen P."/>
            <person name="Wu S."/>
            <person name="Liu J."/>
            <person name="Xiao Y."/>
            <person name="Bu D."/>
            <person name="Tan J."/>
            <person name="Yang L."/>
            <person name="Ye C."/>
            <person name="Zhang J."/>
            <person name="Xu J."/>
            <person name="Zhou Y."/>
            <person name="Yu Y."/>
            <person name="Zhang B."/>
            <person name="Zhuang S."/>
            <person name="Wei H."/>
            <person name="Liu B."/>
            <person name="Lei M."/>
            <person name="Yu H."/>
            <person name="Li Y."/>
            <person name="Xu H."/>
            <person name="Wei S."/>
            <person name="He X."/>
            <person name="Fang L."/>
            <person name="Zhang Z."/>
            <person name="Zhang Y."/>
            <person name="Huang X."/>
            <person name="Su Z."/>
            <person name="Tong W."/>
            <person name="Li J."/>
            <person name="Tong Z."/>
            <person name="Li S."/>
            <person name="Ye J."/>
            <person name="Wang L."/>
            <person name="Fang L."/>
            <person name="Lei T."/>
            <person name="Chen C.-S."/>
            <person name="Chen H.-C."/>
            <person name="Xu Z."/>
            <person name="Li H."/>
            <person name="Huang H."/>
            <person name="Zhang F."/>
            <person name="Xu H."/>
            <person name="Li N."/>
            <person name="Zhao C."/>
            <person name="Li S."/>
            <person name="Dong L."/>
            <person name="Huang Y."/>
            <person name="Li L."/>
            <person name="Xi Y."/>
            <person name="Qi Q."/>
            <person name="Li W."/>
            <person name="Zhang B."/>
            <person name="Hu W."/>
            <person name="Zhang Y."/>
            <person name="Tian X."/>
            <person name="Jiao Y."/>
            <person name="Liang X."/>
            <person name="Jin J."/>
            <person name="Gao L."/>
            <person name="Zheng W."/>
            <person name="Hao B."/>
            <person name="Liu S.-M."/>
            <person name="Wang W."/>
            <person name="Yuan L."/>
            <person name="Cao M."/>
            <person name="McDermott J."/>
            <person name="Samudrala R."/>
            <person name="Wang J."/>
            <person name="Wong G.K.-S."/>
            <person name="Yang H."/>
        </authorList>
    </citation>
    <scope>NUCLEOTIDE SEQUENCE [LARGE SCALE GENOMIC DNA]</scope>
    <source>
        <strain>cv. Nipponbare</strain>
    </source>
</reference>
<reference key="5">
    <citation type="journal article" date="2005" name="Plant Physiol.">
        <title>Large-scale identification of expressed sequence tags involved in rice and rice blast fungus interaction.</title>
        <authorList>
            <person name="Jantasuriyarat C."/>
            <person name="Gowda M."/>
            <person name="Haller K."/>
            <person name="Hatfield J."/>
            <person name="Lu G."/>
            <person name="Stahlberg E."/>
            <person name="Zhou B."/>
            <person name="Li H."/>
            <person name="Kim H."/>
            <person name="Yu Y."/>
            <person name="Dean R.A."/>
            <person name="Wing R.A."/>
            <person name="Soderlund C."/>
            <person name="Wang G.L."/>
        </authorList>
    </citation>
    <scope>NUCLEOTIDE SEQUENCE [LARGE SCALE MRNA]</scope>
    <source>
        <strain>cv. Nipponbare</strain>
        <tissue>Leaf</tissue>
    </source>
</reference>
<reference key="6">
    <citation type="journal article" date="2014" name="Plant Physiol.">
        <title>Functional and evolutionary analysis of the CASPARIAN STRIP MEMBRANE DOMAIN PROTEIN family.</title>
        <authorList>
            <person name="Roppolo D."/>
            <person name="Boeckmann B."/>
            <person name="Pfister A."/>
            <person name="Boutet E."/>
            <person name="Rubio M.C."/>
            <person name="Denervaud-Tendon V."/>
            <person name="Vermeer J.E."/>
            <person name="Gheyselinck J."/>
            <person name="Xenarios I."/>
            <person name="Geldner N."/>
        </authorList>
    </citation>
    <scope>GENE FAMILY</scope>
    <scope>NOMENCLATURE</scope>
</reference>
<proteinExistence type="evidence at transcript level"/>
<accession>Q0DHM7</accession>
<accession>A0A0N7KKW7</accession>
<protein>
    <recommendedName>
        <fullName>CASP-like protein 5B2</fullName>
        <shortName>OsCASPL5B2</shortName>
    </recommendedName>
</protein>
<keyword id="KW-1003">Cell membrane</keyword>
<keyword id="KW-0325">Glycoprotein</keyword>
<keyword id="KW-0472">Membrane</keyword>
<keyword id="KW-1185">Reference proteome</keyword>
<keyword id="KW-0812">Transmembrane</keyword>
<keyword id="KW-1133">Transmembrane helix</keyword>
<comment type="subunit">
    <text evidence="1">Homodimer and heterodimers.</text>
</comment>
<comment type="subcellular location">
    <subcellularLocation>
        <location evidence="1">Cell membrane</location>
        <topology evidence="1">Multi-pass membrane protein</topology>
    </subcellularLocation>
</comment>
<comment type="similarity">
    <text evidence="3">Belongs to the Casparian strip membrane proteins (CASP) family.</text>
</comment>
<gene>
    <name type="ordered locus">Os05g0456500</name>
    <name type="ordered locus">LOC_Os05g38250</name>
    <name type="ORF">OsJ_18787</name>
</gene>
<sequence length="155" mass="16669">MWEVAWWRPGTWGGLAMRVGQVAFAGASIGVMASGAGFANYTAFCYLIASMGLQSLWSLGLACLDVYALTVKRDLNNALLVSLFVIGDWVTALLSFAASCSAGGVMVLFKRDVLFCRRYPQLPCGRFELAVALAFLSWALSATSAIIMFCLLAAF</sequence>